<evidence type="ECO:0000250" key="1"/>
<evidence type="ECO:0000269" key="2">
    <source>
    </source>
</evidence>
<evidence type="ECO:0000269" key="3">
    <source>
    </source>
</evidence>
<evidence type="ECO:0000269" key="4">
    <source>
    </source>
</evidence>
<evidence type="ECO:0000269" key="5">
    <source>
    </source>
</evidence>
<evidence type="ECO:0000305" key="6"/>
<evidence type="ECO:0000305" key="7">
    <source>
    </source>
</evidence>
<reference key="1">
    <citation type="journal article" date="2000" name="Nature">
        <title>Sequence and analysis of chromosome 1 of the plant Arabidopsis thaliana.</title>
        <authorList>
            <person name="Theologis A."/>
            <person name="Ecker J.R."/>
            <person name="Palm C.J."/>
            <person name="Federspiel N.A."/>
            <person name="Kaul S."/>
            <person name="White O."/>
            <person name="Alonso J."/>
            <person name="Altafi H."/>
            <person name="Araujo R."/>
            <person name="Bowman C.L."/>
            <person name="Brooks S.Y."/>
            <person name="Buehler E."/>
            <person name="Chan A."/>
            <person name="Chao Q."/>
            <person name="Chen H."/>
            <person name="Cheuk R.F."/>
            <person name="Chin C.W."/>
            <person name="Chung M.K."/>
            <person name="Conn L."/>
            <person name="Conway A.B."/>
            <person name="Conway A.R."/>
            <person name="Creasy T.H."/>
            <person name="Dewar K."/>
            <person name="Dunn P."/>
            <person name="Etgu P."/>
            <person name="Feldblyum T.V."/>
            <person name="Feng J.-D."/>
            <person name="Fong B."/>
            <person name="Fujii C.Y."/>
            <person name="Gill J.E."/>
            <person name="Goldsmith A.D."/>
            <person name="Haas B."/>
            <person name="Hansen N.F."/>
            <person name="Hughes B."/>
            <person name="Huizar L."/>
            <person name="Hunter J.L."/>
            <person name="Jenkins J."/>
            <person name="Johnson-Hopson C."/>
            <person name="Khan S."/>
            <person name="Khaykin E."/>
            <person name="Kim C.J."/>
            <person name="Koo H.L."/>
            <person name="Kremenetskaia I."/>
            <person name="Kurtz D.B."/>
            <person name="Kwan A."/>
            <person name="Lam B."/>
            <person name="Langin-Hooper S."/>
            <person name="Lee A."/>
            <person name="Lee J.M."/>
            <person name="Lenz C.A."/>
            <person name="Li J.H."/>
            <person name="Li Y.-P."/>
            <person name="Lin X."/>
            <person name="Liu S.X."/>
            <person name="Liu Z.A."/>
            <person name="Luros J.S."/>
            <person name="Maiti R."/>
            <person name="Marziali A."/>
            <person name="Militscher J."/>
            <person name="Miranda M."/>
            <person name="Nguyen M."/>
            <person name="Nierman W.C."/>
            <person name="Osborne B.I."/>
            <person name="Pai G."/>
            <person name="Peterson J."/>
            <person name="Pham P.K."/>
            <person name="Rizzo M."/>
            <person name="Rooney T."/>
            <person name="Rowley D."/>
            <person name="Sakano H."/>
            <person name="Salzberg S.L."/>
            <person name="Schwartz J.R."/>
            <person name="Shinn P."/>
            <person name="Southwick A.M."/>
            <person name="Sun H."/>
            <person name="Tallon L.J."/>
            <person name="Tambunga G."/>
            <person name="Toriumi M.J."/>
            <person name="Town C.D."/>
            <person name="Utterback T."/>
            <person name="Van Aken S."/>
            <person name="Vaysberg M."/>
            <person name="Vysotskaia V.S."/>
            <person name="Walker M."/>
            <person name="Wu D."/>
            <person name="Yu G."/>
            <person name="Fraser C.M."/>
            <person name="Venter J.C."/>
            <person name="Davis R.W."/>
        </authorList>
    </citation>
    <scope>NUCLEOTIDE SEQUENCE [LARGE SCALE GENOMIC DNA]</scope>
    <source>
        <strain>cv. Columbia</strain>
    </source>
</reference>
<reference key="2">
    <citation type="journal article" date="2017" name="Plant J.">
        <title>Araport11: a complete reannotation of the Arabidopsis thaliana reference genome.</title>
        <authorList>
            <person name="Cheng C.Y."/>
            <person name="Krishnakumar V."/>
            <person name="Chan A.P."/>
            <person name="Thibaud-Nissen F."/>
            <person name="Schobel S."/>
            <person name="Town C.D."/>
        </authorList>
    </citation>
    <scope>GENOME REANNOTATION</scope>
    <source>
        <strain>cv. Columbia</strain>
    </source>
</reference>
<reference key="3">
    <citation type="submission" date="2004-09" db="EMBL/GenBank/DDBJ databases">
        <title>Large-scale analysis of RIKEN Arabidopsis full-length (RAFL) cDNAs.</title>
        <authorList>
            <person name="Totoki Y."/>
            <person name="Seki M."/>
            <person name="Ishida J."/>
            <person name="Nakajima M."/>
            <person name="Enju A."/>
            <person name="Kamiya A."/>
            <person name="Narusaka M."/>
            <person name="Shin-i T."/>
            <person name="Nakagawa M."/>
            <person name="Sakamoto N."/>
            <person name="Oishi K."/>
            <person name="Kohara Y."/>
            <person name="Kobayashi M."/>
            <person name="Toyoda A."/>
            <person name="Sakaki Y."/>
            <person name="Sakurai T."/>
            <person name="Iida K."/>
            <person name="Akiyama K."/>
            <person name="Satou M."/>
            <person name="Toyoda T."/>
            <person name="Konagaya A."/>
            <person name="Carninci P."/>
            <person name="Kawai J."/>
            <person name="Hayashizaki Y."/>
            <person name="Shinozaki K."/>
        </authorList>
    </citation>
    <scope>NUCLEOTIDE SEQUENCE [LARGE SCALE MRNA]</scope>
    <source>
        <strain>cv. Columbia</strain>
    </source>
</reference>
<reference key="4">
    <citation type="submission" date="2006-06" db="EMBL/GenBank/DDBJ databases">
        <title>Arabidopsis ORF clones.</title>
        <authorList>
            <person name="Shinn P."/>
            <person name="Chen H."/>
            <person name="Kim C.J."/>
            <person name="Quinitio C."/>
            <person name="Ecker J.R."/>
        </authorList>
    </citation>
    <scope>NUCLEOTIDE SEQUENCE [LARGE SCALE MRNA]</scope>
    <source>
        <strain>cv. Columbia</strain>
    </source>
</reference>
<reference key="5">
    <citation type="journal article" date="2001" name="Physiol. Plantarum">
        <title>Dark-inducible genes from Arabidopsis thaliana are associated with leaf senescence and repressed by sugars.</title>
        <authorList>
            <person name="Fujiki Y."/>
            <person name="Yoshikawa Y."/>
            <person name="Sato T."/>
            <person name="Inada N."/>
            <person name="Ito M."/>
            <person name="Nishida I."/>
            <person name="Watanabe A."/>
        </authorList>
    </citation>
    <scope>NUCLEOTIDE SEQUENCE [MRNA] OF 5-240</scope>
    <scope>INDUCTION BY DARK</scope>
    <scope>DEVELOPMENTAL STAGE</scope>
    <source>
        <strain>cv. Columbia</strain>
    </source>
</reference>
<reference key="6">
    <citation type="journal article" date="2000" name="Plant Physiol.">
        <title>Multiple signaling pathways in gene expression during sugar starvation. Pharmacological analysis of din gene expression in suspension-cultured cells of Arabidopsis.</title>
        <authorList>
            <person name="Fujiki Y."/>
            <person name="Ito M."/>
            <person name="Nishida I."/>
            <person name="Watanabe A."/>
        </authorList>
    </citation>
    <scope>INDUCTION</scope>
</reference>
<reference key="7">
    <citation type="journal article" date="2005" name="Plant Cell Physiol.">
        <title>Response to darkness of late-responsive dark-inducible genes is positively regulated by leaf age and negatively regulated by calmodulin-antagonist-sensitive signalling in Arabidopsis thaliana.</title>
        <authorList>
            <person name="Fujiki Y."/>
            <person name="Nakagawa Y."/>
            <person name="Furumoto T."/>
            <person name="Yoshida S."/>
            <person name="Biswal B."/>
            <person name="Ito M."/>
            <person name="Watanabe A."/>
            <person name="Nishida I."/>
        </authorList>
    </citation>
    <scope>INDUCTION BY DARK</scope>
    <scope>DEVELOPMENTAL STAGE</scope>
</reference>
<reference key="8">
    <citation type="journal article" date="2008" name="J. Biol. Chem.">
        <title>Arabidopsis phosphomannose isomerase 1, but not phosphomannose isomerase 2, is essential for ascorbic acid biosynthesis.</title>
        <authorList>
            <person name="Maruta T."/>
            <person name="Yonemitsu M."/>
            <person name="Yabuta Y."/>
            <person name="Tamoi M."/>
            <person name="Ishikawa T."/>
            <person name="Shigeoka S."/>
        </authorList>
    </citation>
    <scope>FUNCTION</scope>
    <scope>BIOPHYSICOCHEMICAL PROPERTIES</scope>
    <scope>ACTIVITY REGULATION</scope>
    <scope>TISSUE SPECIFICITY</scope>
    <scope>INDUCTION</scope>
    <scope>CATALYTIC ACTIVITY</scope>
</reference>
<proteinExistence type="evidence at protein level"/>
<keyword id="KW-0413">Isomerase</keyword>
<keyword id="KW-0479">Metal-binding</keyword>
<keyword id="KW-1185">Reference proteome</keyword>
<keyword id="KW-0862">Zinc</keyword>
<gene>
    <name type="primary">PMI2</name>
    <name type="synonym">DIN9</name>
    <name type="ordered locus">At1g67070</name>
    <name type="ORF">F1O19.12</name>
</gene>
<organism>
    <name type="scientific">Arabidopsis thaliana</name>
    <name type="common">Mouse-ear cress</name>
    <dbReference type="NCBI Taxonomy" id="3702"/>
    <lineage>
        <taxon>Eukaryota</taxon>
        <taxon>Viridiplantae</taxon>
        <taxon>Streptophyta</taxon>
        <taxon>Embryophyta</taxon>
        <taxon>Tracheophyta</taxon>
        <taxon>Spermatophyta</taxon>
        <taxon>Magnoliopsida</taxon>
        <taxon>eudicotyledons</taxon>
        <taxon>Gunneridae</taxon>
        <taxon>Pentapetalae</taxon>
        <taxon>rosids</taxon>
        <taxon>malvids</taxon>
        <taxon>Brassicales</taxon>
        <taxon>Brassicaceae</taxon>
        <taxon>Camelineae</taxon>
        <taxon>Arabidopsis</taxon>
    </lineage>
</organism>
<comment type="function">
    <text evidence="5">Involved in the synthesis of the GDP-mannose and dolichol-phosphate-mannose required for a number of critical mannosyl transfer reactions.</text>
</comment>
<comment type="catalytic activity">
    <reaction evidence="5">
        <text>D-mannose 6-phosphate = D-fructose 6-phosphate</text>
        <dbReference type="Rhea" id="RHEA:12356"/>
        <dbReference type="ChEBI" id="CHEBI:58735"/>
        <dbReference type="ChEBI" id="CHEBI:61527"/>
        <dbReference type="EC" id="5.3.1.8"/>
    </reaction>
</comment>
<comment type="cofactor">
    <cofactor evidence="1">
        <name>Zn(2+)</name>
        <dbReference type="ChEBI" id="CHEBI:29105"/>
    </cofactor>
    <text evidence="1">Binds 1 zinc ion per subunit.</text>
</comment>
<comment type="activity regulation">
    <text evidence="5">Inhibited by EDTA, Zn(2+), Cd(2+), DTT, p-chloromercuribenzoate and L-ascorbic acid (AsA).</text>
</comment>
<comment type="biophysicochemical properties">
    <kinetics>
        <KM evidence="5">372 uM for mannose-6-phosphate</KM>
        <Vmax evidence="5">22.5 umol/min/mg enzyme with mannose-6-phosphate as substrate</Vmax>
    </kinetics>
    <phDependence>
        <text evidence="5">Optimum pH is 7.5.</text>
    </phDependence>
    <temperatureDependence>
        <text evidence="5">Optimum temperature is 48 degrees Celsius.</text>
    </temperatureDependence>
</comment>
<comment type="pathway">
    <text evidence="7">Nucleotide-sugar biosynthesis; GDP-alpha-D-mannose biosynthesis; alpha-D-mannose 1-phosphate from D-fructose 6-phosphate: step 1/2.</text>
</comment>
<comment type="tissue specificity">
    <text evidence="5">Not expressed in any organs under light (at protein level).</text>
</comment>
<comment type="developmental stage">
    <text evidence="3 4">Expressed at the last stage of senescence in old leaves.</text>
</comment>
<comment type="induction">
    <text evidence="2 3 4 5">By sugar starvation, by dark and by 3-O-methyl-Glc (3-OMG). Down-regulated by sugars. Up-regulated by DCMU, an exogenous photosynthesis inhibitor.</text>
</comment>
<comment type="similarity">
    <text evidence="6">Belongs to the mannose-6-phosphate isomerase type 1 family.</text>
</comment>
<feature type="chain" id="PRO_0000420340" description="Mannose-6-phosphate isomerase 2">
    <location>
        <begin position="1"/>
        <end position="441"/>
    </location>
</feature>
<feature type="active site" evidence="1">
    <location>
        <position position="315"/>
    </location>
</feature>
<feature type="binding site" evidence="1">
    <location>
        <position position="131"/>
    </location>
    <ligand>
        <name>Zn(2+)</name>
        <dbReference type="ChEBI" id="CHEBI:29105"/>
    </ligand>
</feature>
<feature type="binding site" evidence="1">
    <location>
        <position position="133"/>
    </location>
    <ligand>
        <name>Zn(2+)</name>
        <dbReference type="ChEBI" id="CHEBI:29105"/>
    </ligand>
</feature>
<feature type="binding site" evidence="1">
    <location>
        <position position="158"/>
    </location>
    <ligand>
        <name>Zn(2+)</name>
        <dbReference type="ChEBI" id="CHEBI:29105"/>
    </ligand>
</feature>
<feature type="binding site" evidence="1">
    <location>
        <position position="296"/>
    </location>
    <ligand>
        <name>Zn(2+)</name>
        <dbReference type="ChEBI" id="CHEBI:29105"/>
    </ligand>
</feature>
<feature type="sequence conflict" description="In Ref. 5; AAG23720." evidence="6" ref="5">
    <original>S</original>
    <variation>F</variation>
    <location>
        <position position="85"/>
    </location>
</feature>
<feature type="sequence conflict" description="In Ref. 5; AAG23720." evidence="6" ref="5">
    <original>V</original>
    <variation>A</variation>
    <location>
        <position position="90"/>
    </location>
</feature>
<feature type="sequence conflict" description="In Ref. 5; AAG23720." evidence="6" ref="5">
    <original>R</original>
    <variation>S</variation>
    <location>
        <position position="211"/>
    </location>
</feature>
<feature type="sequence conflict" description="In Ref. 3; BAD44147." evidence="6" ref="3">
    <original>L</original>
    <variation>W</variation>
    <location>
        <position position="288"/>
    </location>
</feature>
<sequence>MGADAIQTNGHDQAKLTGGEEIQRLRCFVKNYEWGKLGPESLVARLQEANTGQRVDSEIPYAEFWMGTHESGPSHVEFGSGHGVSDKCMVTLKSWVLDNPNLLGSKVVDKWGCDLPFLFKVLSVTKALSIQAHPNKALAEKLHREDPLLYRDNNHKPEIALAVTPFQALCGFVTLKELKEVITNVPEITELVGSKAADQIFNVHEHDEDERIKSVVRLIFTQLMSASNNETKQVVSRMKNRLLLETKHRELSEKEKLVLELEKQYTGDIGVISAFFFNYVKLNPGEALYLDANEPHAYISGDCVECMAASDNVVRAGLTPKHRDVQTLCSMLTYKLGYPEILKGFPLTPYVTRYLPPFDEFEVDHCDLPRGKSTVFPAVPGPSVYLVIEGKGQLRTGSSKVLVNRGDVLFVPADIEIHVTGESDVMKLYRAGVSSRFFQTL</sequence>
<name>MPI2_ARATH</name>
<protein>
    <recommendedName>
        <fullName>Mannose-6-phosphate isomerase 2</fullName>
        <ecNumber evidence="5">5.3.1.8</ecNumber>
    </recommendedName>
    <alternativeName>
        <fullName>Phosphohexomutase 2</fullName>
    </alternativeName>
    <alternativeName>
        <fullName>Phosphomannose isomerase 2</fullName>
        <shortName>PMI2</shortName>
    </alternativeName>
    <alternativeName>
        <fullName>Protein DARK INDUCIBLE 9</fullName>
    </alternativeName>
</protein>
<accession>Q9FZH5</accession>
<accession>Q67YT4</accession>
<accession>Q9FVM3</accession>
<dbReference type="EC" id="5.3.1.8" evidence="5"/>
<dbReference type="EMBL" id="AC007152">
    <property type="protein sequence ID" value="AAF98217.1"/>
    <property type="molecule type" value="Genomic_DNA"/>
</dbReference>
<dbReference type="EMBL" id="CP002684">
    <property type="protein sequence ID" value="AEE34592.1"/>
    <property type="molecule type" value="Genomic_DNA"/>
</dbReference>
<dbReference type="EMBL" id="CP002684">
    <property type="protein sequence ID" value="ANM59346.1"/>
    <property type="molecule type" value="Genomic_DNA"/>
</dbReference>
<dbReference type="EMBL" id="AK176384">
    <property type="protein sequence ID" value="BAD44147.1"/>
    <property type="molecule type" value="mRNA"/>
</dbReference>
<dbReference type="EMBL" id="AK176481">
    <property type="protein sequence ID" value="BAD44244.1"/>
    <property type="molecule type" value="mRNA"/>
</dbReference>
<dbReference type="EMBL" id="BT025995">
    <property type="protein sequence ID" value="ABG25084.1"/>
    <property type="molecule type" value="mRNA"/>
</dbReference>
<dbReference type="EMBL" id="AF159377">
    <property type="protein sequence ID" value="AAG23720.1"/>
    <property type="molecule type" value="mRNA"/>
</dbReference>
<dbReference type="PIR" id="E96694">
    <property type="entry name" value="E96694"/>
</dbReference>
<dbReference type="RefSeq" id="NP_001319330.1">
    <property type="nucleotide sequence ID" value="NM_001334269.1"/>
</dbReference>
<dbReference type="RefSeq" id="NP_176878.1">
    <property type="nucleotide sequence ID" value="NM_105377.5"/>
</dbReference>
<dbReference type="SMR" id="Q9FZH5"/>
<dbReference type="FunCoup" id="Q9FZH5">
    <property type="interactions" value="3386"/>
</dbReference>
<dbReference type="STRING" id="3702.Q9FZH5"/>
<dbReference type="PaxDb" id="3702-AT1G67070.1"/>
<dbReference type="ProteomicsDB" id="238900"/>
<dbReference type="EnsemblPlants" id="AT1G67070.1">
    <property type="protein sequence ID" value="AT1G67070.1"/>
    <property type="gene ID" value="AT1G67070"/>
</dbReference>
<dbReference type="EnsemblPlants" id="AT1G67070.2">
    <property type="protein sequence ID" value="AT1G67070.2"/>
    <property type="gene ID" value="AT1G67070"/>
</dbReference>
<dbReference type="GeneID" id="843027"/>
<dbReference type="Gramene" id="AT1G67070.1">
    <property type="protein sequence ID" value="AT1G67070.1"/>
    <property type="gene ID" value="AT1G67070"/>
</dbReference>
<dbReference type="Gramene" id="AT1G67070.2">
    <property type="protein sequence ID" value="AT1G67070.2"/>
    <property type="gene ID" value="AT1G67070"/>
</dbReference>
<dbReference type="KEGG" id="ath:AT1G67070"/>
<dbReference type="Araport" id="AT1G67070"/>
<dbReference type="TAIR" id="AT1G67070">
    <property type="gene designation" value="DIN9"/>
</dbReference>
<dbReference type="eggNOG" id="KOG2757">
    <property type="taxonomic scope" value="Eukaryota"/>
</dbReference>
<dbReference type="HOGENOM" id="CLU_026967_2_1_1"/>
<dbReference type="InParanoid" id="Q9FZH5"/>
<dbReference type="OMA" id="EFAACIS"/>
<dbReference type="OrthoDB" id="6605218at2759"/>
<dbReference type="PhylomeDB" id="Q9FZH5"/>
<dbReference type="BioCyc" id="ARA:AT1G67070-MONOMER"/>
<dbReference type="BioCyc" id="MetaCyc:AT1G67070-MONOMER"/>
<dbReference type="SABIO-RK" id="Q9FZH5"/>
<dbReference type="UniPathway" id="UPA00126">
    <property type="reaction ID" value="UER00423"/>
</dbReference>
<dbReference type="PRO" id="PR:Q9FZH5"/>
<dbReference type="Proteomes" id="UP000006548">
    <property type="component" value="Chromosome 1"/>
</dbReference>
<dbReference type="ExpressionAtlas" id="Q9FZH5">
    <property type="expression patterns" value="baseline and differential"/>
</dbReference>
<dbReference type="GO" id="GO:0004476">
    <property type="term" value="F:mannose-6-phosphate isomerase activity"/>
    <property type="evidence" value="ECO:0000314"/>
    <property type="project" value="TAIR"/>
</dbReference>
<dbReference type="GO" id="GO:0008270">
    <property type="term" value="F:zinc ion binding"/>
    <property type="evidence" value="ECO:0007669"/>
    <property type="project" value="InterPro"/>
</dbReference>
<dbReference type="GO" id="GO:0009298">
    <property type="term" value="P:GDP-mannose biosynthetic process"/>
    <property type="evidence" value="ECO:0007669"/>
    <property type="project" value="UniProtKB-UniPathway"/>
</dbReference>
<dbReference type="GO" id="GO:0019853">
    <property type="term" value="P:L-ascorbic acid biosynthetic process"/>
    <property type="evidence" value="ECO:0000315"/>
    <property type="project" value="TAIR"/>
</dbReference>
<dbReference type="GO" id="GO:0009646">
    <property type="term" value="P:response to absence of light"/>
    <property type="evidence" value="ECO:0000270"/>
    <property type="project" value="UniProtKB"/>
</dbReference>
<dbReference type="GO" id="GO:0046686">
    <property type="term" value="P:response to cadmium ion"/>
    <property type="evidence" value="ECO:0000270"/>
    <property type="project" value="UniProtKB"/>
</dbReference>
<dbReference type="GO" id="GO:0046680">
    <property type="term" value="P:response to DDT"/>
    <property type="evidence" value="ECO:0000270"/>
    <property type="project" value="UniProtKB"/>
</dbReference>
<dbReference type="GO" id="GO:0033591">
    <property type="term" value="P:response to L-ascorbic acid"/>
    <property type="evidence" value="ECO:0000270"/>
    <property type="project" value="UniProtKB"/>
</dbReference>
<dbReference type="GO" id="GO:0009744">
    <property type="term" value="P:response to sucrose"/>
    <property type="evidence" value="ECO:0000270"/>
    <property type="project" value="UniProtKB"/>
</dbReference>
<dbReference type="GO" id="GO:0010043">
    <property type="term" value="P:response to zinc ion"/>
    <property type="evidence" value="ECO:0000270"/>
    <property type="project" value="UniProtKB"/>
</dbReference>
<dbReference type="CDD" id="cd07011">
    <property type="entry name" value="cupin_PMI_type_I_N"/>
    <property type="match status" value="1"/>
</dbReference>
<dbReference type="FunFam" id="1.10.441.10:FF:000001">
    <property type="entry name" value="Mannose-6-phosphate isomerase"/>
    <property type="match status" value="1"/>
</dbReference>
<dbReference type="FunFam" id="2.60.120.10:FF:000044">
    <property type="entry name" value="Mannose-6-phosphate isomerase"/>
    <property type="match status" value="1"/>
</dbReference>
<dbReference type="Gene3D" id="2.60.120.10">
    <property type="entry name" value="Jelly Rolls"/>
    <property type="match status" value="2"/>
</dbReference>
<dbReference type="Gene3D" id="1.10.441.10">
    <property type="entry name" value="Phosphomannose Isomerase, domain 2"/>
    <property type="match status" value="1"/>
</dbReference>
<dbReference type="InterPro" id="IPR001250">
    <property type="entry name" value="Man6P_Isoase-1"/>
</dbReference>
<dbReference type="InterPro" id="IPR016305">
    <property type="entry name" value="Mannose-6-P_Isomerase"/>
</dbReference>
<dbReference type="InterPro" id="IPR018050">
    <property type="entry name" value="Pmannose_isomerase-type1_CS"/>
</dbReference>
<dbReference type="InterPro" id="IPR046456">
    <property type="entry name" value="PMI_typeI_C"/>
</dbReference>
<dbReference type="InterPro" id="IPR046457">
    <property type="entry name" value="PMI_typeI_cat"/>
</dbReference>
<dbReference type="InterPro" id="IPR046458">
    <property type="entry name" value="PMI_typeI_hel"/>
</dbReference>
<dbReference type="InterPro" id="IPR014710">
    <property type="entry name" value="RmlC-like_jellyroll"/>
</dbReference>
<dbReference type="InterPro" id="IPR011051">
    <property type="entry name" value="RmlC_Cupin_sf"/>
</dbReference>
<dbReference type="NCBIfam" id="TIGR00218">
    <property type="entry name" value="manA"/>
    <property type="match status" value="1"/>
</dbReference>
<dbReference type="PANTHER" id="PTHR10309">
    <property type="entry name" value="MANNOSE-6-PHOSPHATE ISOMERASE"/>
    <property type="match status" value="1"/>
</dbReference>
<dbReference type="PANTHER" id="PTHR10309:SF0">
    <property type="entry name" value="MANNOSE-6-PHOSPHATE ISOMERASE"/>
    <property type="match status" value="1"/>
</dbReference>
<dbReference type="Pfam" id="PF01238">
    <property type="entry name" value="PMI_typeI_C"/>
    <property type="match status" value="1"/>
</dbReference>
<dbReference type="Pfam" id="PF20511">
    <property type="entry name" value="PMI_typeI_cat"/>
    <property type="match status" value="1"/>
</dbReference>
<dbReference type="Pfam" id="PF20512">
    <property type="entry name" value="PMI_typeI_hel"/>
    <property type="match status" value="1"/>
</dbReference>
<dbReference type="PIRSF" id="PIRSF001480">
    <property type="entry name" value="Mannose-6-phosphate_isomerase"/>
    <property type="match status" value="1"/>
</dbReference>
<dbReference type="PRINTS" id="PR00714">
    <property type="entry name" value="MAN6PISMRASE"/>
</dbReference>
<dbReference type="SUPFAM" id="SSF51182">
    <property type="entry name" value="RmlC-like cupins"/>
    <property type="match status" value="1"/>
</dbReference>
<dbReference type="PROSITE" id="PS00965">
    <property type="entry name" value="PMI_I_1"/>
    <property type="match status" value="1"/>
</dbReference>
<dbReference type="PROSITE" id="PS00966">
    <property type="entry name" value="PMI_I_2"/>
    <property type="match status" value="1"/>
</dbReference>